<dbReference type="EC" id="6.1.1.15" evidence="1"/>
<dbReference type="EMBL" id="AL591688">
    <property type="protein sequence ID" value="CAC45865.1"/>
    <property type="molecule type" value="Genomic_DNA"/>
</dbReference>
<dbReference type="RefSeq" id="NP_385392.1">
    <property type="nucleotide sequence ID" value="NC_003047.1"/>
</dbReference>
<dbReference type="RefSeq" id="WP_003531873.1">
    <property type="nucleotide sequence ID" value="NC_003047.1"/>
</dbReference>
<dbReference type="SMR" id="Q92QN2"/>
<dbReference type="EnsemblBacteria" id="CAC45865">
    <property type="protein sequence ID" value="CAC45865"/>
    <property type="gene ID" value="SMc01934"/>
</dbReference>
<dbReference type="KEGG" id="sme:SMc01934"/>
<dbReference type="PATRIC" id="fig|266834.11.peg.2700"/>
<dbReference type="eggNOG" id="COG0442">
    <property type="taxonomic scope" value="Bacteria"/>
</dbReference>
<dbReference type="HOGENOM" id="CLU_016739_4_2_5"/>
<dbReference type="OrthoDB" id="9809052at2"/>
<dbReference type="Proteomes" id="UP000001976">
    <property type="component" value="Chromosome"/>
</dbReference>
<dbReference type="GO" id="GO:0005829">
    <property type="term" value="C:cytosol"/>
    <property type="evidence" value="ECO:0007669"/>
    <property type="project" value="TreeGrafter"/>
</dbReference>
<dbReference type="GO" id="GO:0005524">
    <property type="term" value="F:ATP binding"/>
    <property type="evidence" value="ECO:0007669"/>
    <property type="project" value="UniProtKB-UniRule"/>
</dbReference>
<dbReference type="GO" id="GO:0004827">
    <property type="term" value="F:proline-tRNA ligase activity"/>
    <property type="evidence" value="ECO:0007669"/>
    <property type="project" value="UniProtKB-UniRule"/>
</dbReference>
<dbReference type="GO" id="GO:0006433">
    <property type="term" value="P:prolyl-tRNA aminoacylation"/>
    <property type="evidence" value="ECO:0007669"/>
    <property type="project" value="UniProtKB-UniRule"/>
</dbReference>
<dbReference type="CDD" id="cd00861">
    <property type="entry name" value="ProRS_anticodon_short"/>
    <property type="match status" value="1"/>
</dbReference>
<dbReference type="CDD" id="cd00779">
    <property type="entry name" value="ProRS_core_prok"/>
    <property type="match status" value="1"/>
</dbReference>
<dbReference type="FunFam" id="3.30.930.10:FF:000042">
    <property type="entry name" value="probable proline--tRNA ligase, mitochondrial"/>
    <property type="match status" value="1"/>
</dbReference>
<dbReference type="FunFam" id="3.40.50.800:FF:000032">
    <property type="entry name" value="Proline--tRNA ligase"/>
    <property type="match status" value="1"/>
</dbReference>
<dbReference type="Gene3D" id="3.40.50.800">
    <property type="entry name" value="Anticodon-binding domain"/>
    <property type="match status" value="1"/>
</dbReference>
<dbReference type="Gene3D" id="3.30.930.10">
    <property type="entry name" value="Bira Bifunctional Protein, Domain 2"/>
    <property type="match status" value="1"/>
</dbReference>
<dbReference type="HAMAP" id="MF_01570">
    <property type="entry name" value="Pro_tRNA_synth_type2"/>
    <property type="match status" value="1"/>
</dbReference>
<dbReference type="InterPro" id="IPR002314">
    <property type="entry name" value="aa-tRNA-synt_IIb"/>
</dbReference>
<dbReference type="InterPro" id="IPR006195">
    <property type="entry name" value="aa-tRNA-synth_II"/>
</dbReference>
<dbReference type="InterPro" id="IPR045864">
    <property type="entry name" value="aa-tRNA-synth_II/BPL/LPL"/>
</dbReference>
<dbReference type="InterPro" id="IPR004154">
    <property type="entry name" value="Anticodon-bd"/>
</dbReference>
<dbReference type="InterPro" id="IPR036621">
    <property type="entry name" value="Anticodon-bd_dom_sf"/>
</dbReference>
<dbReference type="InterPro" id="IPR002316">
    <property type="entry name" value="Pro-tRNA-ligase_IIa"/>
</dbReference>
<dbReference type="InterPro" id="IPR004500">
    <property type="entry name" value="Pro-tRNA-synth_IIa_bac-type"/>
</dbReference>
<dbReference type="InterPro" id="IPR050062">
    <property type="entry name" value="Pro-tRNA_synthetase"/>
</dbReference>
<dbReference type="InterPro" id="IPR023716">
    <property type="entry name" value="Prolyl-tRNA_ligase_IIa_type2"/>
</dbReference>
<dbReference type="InterPro" id="IPR044140">
    <property type="entry name" value="ProRS_anticodon_short"/>
</dbReference>
<dbReference type="InterPro" id="IPR033730">
    <property type="entry name" value="ProRS_core_prok"/>
</dbReference>
<dbReference type="NCBIfam" id="NF008979">
    <property type="entry name" value="PRK12325.1"/>
    <property type="match status" value="1"/>
</dbReference>
<dbReference type="NCBIfam" id="TIGR00409">
    <property type="entry name" value="proS_fam_II"/>
    <property type="match status" value="1"/>
</dbReference>
<dbReference type="PANTHER" id="PTHR42753">
    <property type="entry name" value="MITOCHONDRIAL RIBOSOME PROTEIN L39/PROLYL-TRNA LIGASE FAMILY MEMBER"/>
    <property type="match status" value="1"/>
</dbReference>
<dbReference type="PANTHER" id="PTHR42753:SF2">
    <property type="entry name" value="PROLINE--TRNA LIGASE"/>
    <property type="match status" value="1"/>
</dbReference>
<dbReference type="Pfam" id="PF03129">
    <property type="entry name" value="HGTP_anticodon"/>
    <property type="match status" value="1"/>
</dbReference>
<dbReference type="Pfam" id="PF00587">
    <property type="entry name" value="tRNA-synt_2b"/>
    <property type="match status" value="1"/>
</dbReference>
<dbReference type="PRINTS" id="PR01046">
    <property type="entry name" value="TRNASYNTHPRO"/>
</dbReference>
<dbReference type="SUPFAM" id="SSF52954">
    <property type="entry name" value="Class II aaRS ABD-related"/>
    <property type="match status" value="1"/>
</dbReference>
<dbReference type="SUPFAM" id="SSF55681">
    <property type="entry name" value="Class II aaRS and biotin synthetases"/>
    <property type="match status" value="1"/>
</dbReference>
<dbReference type="PROSITE" id="PS50862">
    <property type="entry name" value="AA_TRNA_LIGASE_II"/>
    <property type="match status" value="1"/>
</dbReference>
<keyword id="KW-0030">Aminoacyl-tRNA synthetase</keyword>
<keyword id="KW-0067">ATP-binding</keyword>
<keyword id="KW-0963">Cytoplasm</keyword>
<keyword id="KW-0436">Ligase</keyword>
<keyword id="KW-0547">Nucleotide-binding</keyword>
<keyword id="KW-0648">Protein biosynthesis</keyword>
<keyword id="KW-1185">Reference proteome</keyword>
<gene>
    <name evidence="1" type="primary">proS</name>
    <name type="ordered locus">R01286</name>
    <name type="ORF">SMc01934</name>
</gene>
<organism>
    <name type="scientific">Rhizobium meliloti (strain 1021)</name>
    <name type="common">Ensifer meliloti</name>
    <name type="synonym">Sinorhizobium meliloti</name>
    <dbReference type="NCBI Taxonomy" id="266834"/>
    <lineage>
        <taxon>Bacteria</taxon>
        <taxon>Pseudomonadati</taxon>
        <taxon>Pseudomonadota</taxon>
        <taxon>Alphaproteobacteria</taxon>
        <taxon>Hyphomicrobiales</taxon>
        <taxon>Rhizobiaceae</taxon>
        <taxon>Sinorhizobium/Ensifer group</taxon>
        <taxon>Sinorhizobium</taxon>
    </lineage>
</organism>
<proteinExistence type="inferred from homology"/>
<evidence type="ECO:0000255" key="1">
    <source>
        <dbReference type="HAMAP-Rule" id="MF_01570"/>
    </source>
</evidence>
<sequence length="442" mass="49428">MRLSRFFMPILKENPKEAEIVSHRLMLRTGMVRQQSAGIYTWLPLGKRVLDKVNAIIREEQNRSGAIELLMPTLQSAELWQESGRYDAYGKEMLRIKDRQDRPMLYGPTNEEMITDIFRSYVKSYRNLPLNLYHIQLKFRDEIRPRFGTMRSREFLMKDAYSFDLDRAGAEHAYNKMFAAYLRTFDRMGLRAIPMRADTGPIGGNLSHEFIILADTGESEVFCHKDFLGFDIPGEDTNFDDVAGLKTIFDKWTSRYAATSEMHDEAAFGAIAEGERLSARGIEVGHIFYFGTKYSEAMGAKVLGPDGKEHTVHMGSYGIGPTRLVPAIIEASHDDNGIIWPKGIAPFDVVVINMKTGDEACDAACGKVYSDLGKAGFDVLLDDTDERAGGKFATADLIGVPVQVIVGPRSIANGEVEVKDRKTGARETMTVEAAINKLVAAR</sequence>
<name>SYP_RHIME</name>
<reference key="1">
    <citation type="journal article" date="2001" name="Proc. Natl. Acad. Sci. U.S.A.">
        <title>Analysis of the chromosome sequence of the legume symbiont Sinorhizobium meliloti strain 1021.</title>
        <authorList>
            <person name="Capela D."/>
            <person name="Barloy-Hubler F."/>
            <person name="Gouzy J."/>
            <person name="Bothe G."/>
            <person name="Ampe F."/>
            <person name="Batut J."/>
            <person name="Boistard P."/>
            <person name="Becker A."/>
            <person name="Boutry M."/>
            <person name="Cadieu E."/>
            <person name="Dreano S."/>
            <person name="Gloux S."/>
            <person name="Godrie T."/>
            <person name="Goffeau A."/>
            <person name="Kahn D."/>
            <person name="Kiss E."/>
            <person name="Lelaure V."/>
            <person name="Masuy D."/>
            <person name="Pohl T."/>
            <person name="Portetelle D."/>
            <person name="Puehler A."/>
            <person name="Purnelle B."/>
            <person name="Ramsperger U."/>
            <person name="Renard C."/>
            <person name="Thebault P."/>
            <person name="Vandenbol M."/>
            <person name="Weidner S."/>
            <person name="Galibert F."/>
        </authorList>
    </citation>
    <scope>NUCLEOTIDE SEQUENCE [LARGE SCALE GENOMIC DNA]</scope>
    <source>
        <strain>1021</strain>
    </source>
</reference>
<reference key="2">
    <citation type="journal article" date="2001" name="Science">
        <title>The composite genome of the legume symbiont Sinorhizobium meliloti.</title>
        <authorList>
            <person name="Galibert F."/>
            <person name="Finan T.M."/>
            <person name="Long S.R."/>
            <person name="Puehler A."/>
            <person name="Abola P."/>
            <person name="Ampe F."/>
            <person name="Barloy-Hubler F."/>
            <person name="Barnett M.J."/>
            <person name="Becker A."/>
            <person name="Boistard P."/>
            <person name="Bothe G."/>
            <person name="Boutry M."/>
            <person name="Bowser L."/>
            <person name="Buhrmester J."/>
            <person name="Cadieu E."/>
            <person name="Capela D."/>
            <person name="Chain P."/>
            <person name="Cowie A."/>
            <person name="Davis R.W."/>
            <person name="Dreano S."/>
            <person name="Federspiel N.A."/>
            <person name="Fisher R.F."/>
            <person name="Gloux S."/>
            <person name="Godrie T."/>
            <person name="Goffeau A."/>
            <person name="Golding B."/>
            <person name="Gouzy J."/>
            <person name="Gurjal M."/>
            <person name="Hernandez-Lucas I."/>
            <person name="Hong A."/>
            <person name="Huizar L."/>
            <person name="Hyman R.W."/>
            <person name="Jones T."/>
            <person name="Kahn D."/>
            <person name="Kahn M.L."/>
            <person name="Kalman S."/>
            <person name="Keating D.H."/>
            <person name="Kiss E."/>
            <person name="Komp C."/>
            <person name="Lelaure V."/>
            <person name="Masuy D."/>
            <person name="Palm C."/>
            <person name="Peck M.C."/>
            <person name="Pohl T.M."/>
            <person name="Portetelle D."/>
            <person name="Purnelle B."/>
            <person name="Ramsperger U."/>
            <person name="Surzycki R."/>
            <person name="Thebault P."/>
            <person name="Vandenbol M."/>
            <person name="Vorhoelter F.J."/>
            <person name="Weidner S."/>
            <person name="Wells D.H."/>
            <person name="Wong K."/>
            <person name="Yeh K.-C."/>
            <person name="Batut J."/>
        </authorList>
    </citation>
    <scope>NUCLEOTIDE SEQUENCE [LARGE SCALE GENOMIC DNA]</scope>
    <source>
        <strain>1021</strain>
    </source>
</reference>
<accession>Q92QN2</accession>
<protein>
    <recommendedName>
        <fullName evidence="1">Proline--tRNA ligase</fullName>
        <ecNumber evidence="1">6.1.1.15</ecNumber>
    </recommendedName>
    <alternativeName>
        <fullName evidence="1">Prolyl-tRNA synthetase</fullName>
        <shortName evidence="1">ProRS</shortName>
    </alternativeName>
</protein>
<feature type="chain" id="PRO_0000248909" description="Proline--tRNA ligase">
    <location>
        <begin position="1"/>
        <end position="442"/>
    </location>
</feature>
<comment type="function">
    <text evidence="1">Catalyzes the attachment of proline to tRNA(Pro) in a two-step reaction: proline is first activated by ATP to form Pro-AMP and then transferred to the acceptor end of tRNA(Pro).</text>
</comment>
<comment type="catalytic activity">
    <reaction evidence="1">
        <text>tRNA(Pro) + L-proline + ATP = L-prolyl-tRNA(Pro) + AMP + diphosphate</text>
        <dbReference type="Rhea" id="RHEA:14305"/>
        <dbReference type="Rhea" id="RHEA-COMP:9700"/>
        <dbReference type="Rhea" id="RHEA-COMP:9702"/>
        <dbReference type="ChEBI" id="CHEBI:30616"/>
        <dbReference type="ChEBI" id="CHEBI:33019"/>
        <dbReference type="ChEBI" id="CHEBI:60039"/>
        <dbReference type="ChEBI" id="CHEBI:78442"/>
        <dbReference type="ChEBI" id="CHEBI:78532"/>
        <dbReference type="ChEBI" id="CHEBI:456215"/>
        <dbReference type="EC" id="6.1.1.15"/>
    </reaction>
</comment>
<comment type="subunit">
    <text evidence="1">Homodimer.</text>
</comment>
<comment type="subcellular location">
    <subcellularLocation>
        <location evidence="1">Cytoplasm</location>
    </subcellularLocation>
</comment>
<comment type="similarity">
    <text evidence="1">Belongs to the class-II aminoacyl-tRNA synthetase family. ProS type 2 subfamily.</text>
</comment>